<gene>
    <name type="primary">CAB1R</name>
    <name type="ordered locus">Os09g0346500</name>
    <name type="ordered locus">LOC_Os09g17740</name>
    <name type="ORF">OSJNBb0085I16.35</name>
    <name type="ORF">P0512H04.4</name>
</gene>
<organism>
    <name type="scientific">Oryza sativa subsp. japonica</name>
    <name type="common">Rice</name>
    <dbReference type="NCBI Taxonomy" id="39947"/>
    <lineage>
        <taxon>Eukaryota</taxon>
        <taxon>Viridiplantae</taxon>
        <taxon>Streptophyta</taxon>
        <taxon>Embryophyta</taxon>
        <taxon>Tracheophyta</taxon>
        <taxon>Spermatophyta</taxon>
        <taxon>Magnoliopsida</taxon>
        <taxon>Liliopsida</taxon>
        <taxon>Poales</taxon>
        <taxon>Poaceae</taxon>
        <taxon>BOP clade</taxon>
        <taxon>Oryzoideae</taxon>
        <taxon>Oryzeae</taxon>
        <taxon>Oryzinae</taxon>
        <taxon>Oryza</taxon>
        <taxon>Oryza sativa</taxon>
    </lineage>
</organism>
<accession>P12330</accession>
<accession>Q0J2G2</accession>
<accession>Q6EQF5</accession>
<feature type="transit peptide" description="Chloroplast" evidence="5">
    <location>
        <begin position="1"/>
        <end position="32"/>
    </location>
</feature>
<feature type="chain" id="PRO_0000003677" description="Chlorophyll a-b binding protein 1, chloroplastic">
    <location>
        <begin position="33"/>
        <end position="265"/>
    </location>
</feature>
<feature type="transmembrane region" description="Helical" evidence="4">
    <location>
        <begin position="99"/>
        <end position="119"/>
    </location>
</feature>
<feature type="transmembrane region" description="Helical" evidence="4">
    <location>
        <begin position="151"/>
        <end position="171"/>
    </location>
</feature>
<feature type="transmembrane region" description="Helical" evidence="4">
    <location>
        <begin position="180"/>
        <end position="200"/>
    </location>
</feature>
<feature type="transmembrane region" description="Helical" evidence="4">
    <location>
        <begin position="219"/>
        <end position="239"/>
    </location>
</feature>
<feature type="binding site" description="axial binding residue" evidence="3">
    <location>
        <position position="57"/>
    </location>
    <ligand>
        <name>chlorophyll b</name>
        <dbReference type="ChEBI" id="CHEBI:61721"/>
        <label>1</label>
    </ligand>
    <ligandPart>
        <name>Mg</name>
        <dbReference type="ChEBI" id="CHEBI:25107"/>
    </ligandPart>
</feature>
<feature type="binding site" evidence="1">
    <location>
        <position position="79"/>
    </location>
    <ligand>
        <name>chlorophyll a</name>
        <dbReference type="ChEBI" id="CHEBI:58416"/>
        <label>1</label>
    </ligand>
</feature>
<feature type="binding site" evidence="1">
    <location>
        <position position="85"/>
    </location>
    <ligand>
        <name>chlorophyll a</name>
        <dbReference type="ChEBI" id="CHEBI:58416"/>
        <label>1</label>
    </ligand>
</feature>
<feature type="binding site" description="axial binding residue" evidence="3">
    <location>
        <position position="98"/>
    </location>
    <ligand>
        <name>chlorophyll a</name>
        <dbReference type="ChEBI" id="CHEBI:58416"/>
        <label>1</label>
    </ligand>
    <ligandPart>
        <name>Mg</name>
        <dbReference type="ChEBI" id="CHEBI:25107"/>
    </ligandPart>
</feature>
<feature type="binding site" description="axial binding residue" evidence="3">
    <location>
        <position position="101"/>
    </location>
    <ligand>
        <name>chlorophyll a</name>
        <dbReference type="ChEBI" id="CHEBI:58416"/>
        <label>2</label>
    </ligand>
    <ligandPart>
        <name>Mg</name>
        <dbReference type="ChEBI" id="CHEBI:25107"/>
    </ligandPart>
</feature>
<feature type="binding site" evidence="1">
    <location>
        <position position="103"/>
    </location>
    <ligand>
        <name>chlorophyll b</name>
        <dbReference type="ChEBI" id="CHEBI:61721"/>
        <label>2</label>
    </ligand>
</feature>
<feature type="binding site" evidence="1">
    <location>
        <position position="136"/>
    </location>
    <ligand>
        <name>chlorophyll a</name>
        <dbReference type="ChEBI" id="CHEBI:58416"/>
        <label>3</label>
    </ligand>
</feature>
<feature type="binding site" evidence="1">
    <location>
        <position position="146"/>
    </location>
    <ligand>
        <name>chlorophyll a</name>
        <dbReference type="ChEBI" id="CHEBI:58416"/>
        <label>3</label>
    </ligand>
</feature>
<feature type="binding site" description="axial binding residue" evidence="1">
    <location>
        <position position="152"/>
    </location>
    <ligand>
        <name>chlorophyll b</name>
        <dbReference type="ChEBI" id="CHEBI:61721"/>
        <label>2</label>
    </ligand>
    <ligandPart>
        <name>Mg</name>
        <dbReference type="ChEBI" id="CHEBI:25107"/>
    </ligandPart>
</feature>
<feature type="binding site" evidence="1">
    <location>
        <position position="156"/>
    </location>
    <ligand>
        <name>chlorophyll b</name>
        <dbReference type="ChEBI" id="CHEBI:61721"/>
        <label>3</label>
    </ligand>
</feature>
<feature type="binding site" evidence="1">
    <location>
        <position position="164"/>
    </location>
    <ligand>
        <name>chlorophyll b</name>
        <dbReference type="ChEBI" id="CHEBI:61721"/>
        <label>4</label>
    </ligand>
</feature>
<feature type="binding site" evidence="2">
    <location>
        <position position="164"/>
    </location>
    <ligand>
        <name>chlorophyll b</name>
        <dbReference type="ChEBI" id="CHEBI:61721"/>
        <label>5</label>
    </ligand>
</feature>
<feature type="binding site" description="axial binding residue" evidence="3">
    <location>
        <position position="172"/>
    </location>
    <ligand>
        <name>chlorophyll b</name>
        <dbReference type="ChEBI" id="CHEBI:61721"/>
        <label>3</label>
    </ligand>
    <ligandPart>
        <name>Mg</name>
        <dbReference type="ChEBI" id="CHEBI:25107"/>
    </ligandPart>
</feature>
<feature type="binding site" evidence="1">
    <location>
        <position position="175"/>
    </location>
    <ligand>
        <name>chlorophyll b</name>
        <dbReference type="ChEBI" id="CHEBI:61721"/>
        <label>4</label>
    </ligand>
</feature>
<feature type="binding site" evidence="1">
    <location>
        <position position="181"/>
    </location>
    <ligand>
        <name>chlorophyll b</name>
        <dbReference type="ChEBI" id="CHEBI:61721"/>
        <label>2</label>
    </ligand>
</feature>
<feature type="binding site" evidence="1">
    <location>
        <position position="212"/>
    </location>
    <ligand>
        <name>chlorophyll a</name>
        <dbReference type="ChEBI" id="CHEBI:58416"/>
        <label>5</label>
    </ligand>
</feature>
<feature type="binding site" description="axial binding residue" evidence="3">
    <location>
        <position position="213"/>
    </location>
    <ligand>
        <name>chlorophyll a</name>
        <dbReference type="ChEBI" id="CHEBI:58416"/>
        <label>3</label>
    </ligand>
    <ligandPart>
        <name>Mg</name>
        <dbReference type="ChEBI" id="CHEBI:25107"/>
    </ligandPart>
</feature>
<feature type="binding site" description="axial binding residue" evidence="3">
    <location>
        <position position="216"/>
    </location>
    <ligand>
        <name>chlorophyll a</name>
        <dbReference type="ChEBI" id="CHEBI:58416"/>
        <label>4</label>
    </ligand>
    <ligandPart>
        <name>Mg</name>
        <dbReference type="ChEBI" id="CHEBI:25107"/>
    </ligandPart>
</feature>
<feature type="binding site" evidence="1">
    <location>
        <position position="218"/>
    </location>
    <ligand>
        <name>chlorophyll a</name>
        <dbReference type="ChEBI" id="CHEBI:58416"/>
        <label>1</label>
    </ligand>
</feature>
<feature type="binding site" description="axial binding residue" evidence="3">
    <location>
        <position position="230"/>
    </location>
    <ligand>
        <name>chlorophyll a</name>
        <dbReference type="ChEBI" id="CHEBI:58416"/>
        <label>5</label>
    </ligand>
    <ligandPart>
        <name>Mg</name>
        <dbReference type="ChEBI" id="CHEBI:25107"/>
    </ligandPart>
</feature>
<feature type="binding site" description="axial binding residue" evidence="3">
    <location>
        <position position="245"/>
    </location>
    <ligand>
        <name>chlorophyll a</name>
        <dbReference type="ChEBI" id="CHEBI:58416"/>
        <label>6</label>
    </ligand>
    <ligandPart>
        <name>Mg</name>
        <dbReference type="ChEBI" id="CHEBI:25107"/>
    </ligandPart>
</feature>
<feature type="binding site" evidence="1">
    <location>
        <position position="254"/>
    </location>
    <ligand>
        <name>chlorophyll a</name>
        <dbReference type="ChEBI" id="CHEBI:58416"/>
        <label>6</label>
    </ligand>
</feature>
<feature type="binding site" evidence="1">
    <location>
        <position position="261"/>
    </location>
    <ligand>
        <name>chlorophyll b</name>
        <dbReference type="ChEBI" id="CHEBI:61721"/>
        <label>5</label>
    </ligand>
</feature>
<feature type="modified residue" description="N2-acetylarginine" evidence="1">
    <location>
        <position position="33"/>
    </location>
</feature>
<feature type="modified residue" description="Phosphothreonine" evidence="1">
    <location>
        <position position="35"/>
    </location>
</feature>
<feature type="sequence conflict" description="In Ref. 1; CAA32108." evidence="5" ref="1">
    <original>G</original>
    <variation>GR</variation>
    <location>
        <position position="63"/>
    </location>
</feature>
<feature type="sequence conflict" description="In Ref. 2; BAA00536." evidence="5" ref="2">
    <original>V</original>
    <variation>L</variation>
    <location>
        <position position="99"/>
    </location>
</feature>
<feature type="sequence conflict" description="In Ref. 1; CAA32108." evidence="5" ref="1">
    <original>F</original>
    <variation>C</variation>
    <location>
        <position position="206"/>
    </location>
</feature>
<feature type="sequence conflict" description="In Ref. 1; CAA32108." evidence="5" ref="1">
    <original>E</original>
    <variation>K</variation>
    <location>
        <position position="213"/>
    </location>
</feature>
<feature type="sequence conflict" description="In Ref. 2; BAA00536." evidence="5" ref="2">
    <original>N</original>
    <variation>K</variation>
    <location>
        <position position="216"/>
    </location>
</feature>
<sequence length="265" mass="28014">MAAATMALSSPVMARAAPSTSSALFGEARITMRKTAAKPKPAASSGSPWYGADRVLYLGPLSGEPPSYLTGEFPGDYGWDTAGLSADPETFAKNRELEVIHSRWAMLGALGCVFPELLARNGVKFGEAVWFKAGSQIFSEGGLDYLGNPSLIHAQSILAIWAVQVVLMGAVEGYRIAGGPLGEVVDPLYPGGAFDPLGLADDPEAFAELKVKEIKNGRLAMFSMFGFFVQAIVTGKGPLENLADHLADPVNNNAWAYATNFVPGK</sequence>
<keyword id="KW-0007">Acetylation</keyword>
<keyword id="KW-0148">Chlorophyll</keyword>
<keyword id="KW-0150">Chloroplast</keyword>
<keyword id="KW-0157">Chromophore</keyword>
<keyword id="KW-0460">Magnesium</keyword>
<keyword id="KW-0472">Membrane</keyword>
<keyword id="KW-0479">Metal-binding</keyword>
<keyword id="KW-0597">Phosphoprotein</keyword>
<keyword id="KW-0602">Photosynthesis</keyword>
<keyword id="KW-0603">Photosystem I</keyword>
<keyword id="KW-0604">Photosystem II</keyword>
<keyword id="KW-0934">Plastid</keyword>
<keyword id="KW-1185">Reference proteome</keyword>
<keyword id="KW-0793">Thylakoid</keyword>
<keyword id="KW-0809">Transit peptide</keyword>
<keyword id="KW-0812">Transmembrane</keyword>
<keyword id="KW-1133">Transmembrane helix</keyword>
<name>CB21_ORYSJ</name>
<proteinExistence type="evidence at transcript level"/>
<dbReference type="EMBL" id="X13908">
    <property type="protein sequence ID" value="CAA32108.1"/>
    <property type="molecule type" value="Genomic_DNA"/>
</dbReference>
<dbReference type="EMBL" id="D00641">
    <property type="protein sequence ID" value="BAA00536.1"/>
    <property type="molecule type" value="mRNA"/>
</dbReference>
<dbReference type="EMBL" id="AP005313">
    <property type="protein sequence ID" value="BAD28469.1"/>
    <property type="molecule type" value="Genomic_DNA"/>
</dbReference>
<dbReference type="EMBL" id="AP005700">
    <property type="protein sequence ID" value="BAD29115.1"/>
    <property type="molecule type" value="Genomic_DNA"/>
</dbReference>
<dbReference type="EMBL" id="AP008215">
    <property type="protein sequence ID" value="BAF24853.1"/>
    <property type="molecule type" value="Genomic_DNA"/>
</dbReference>
<dbReference type="EMBL" id="AP014965">
    <property type="protein sequence ID" value="BAT07611.1"/>
    <property type="molecule type" value="Genomic_DNA"/>
</dbReference>
<dbReference type="EMBL" id="AK060851">
    <property type="protein sequence ID" value="BAG87574.1"/>
    <property type="molecule type" value="mRNA"/>
</dbReference>
<dbReference type="EMBL" id="AK104281">
    <property type="protein sequence ID" value="BAG96567.1"/>
    <property type="molecule type" value="mRNA"/>
</dbReference>
<dbReference type="EMBL" id="AK104288">
    <property type="protein sequence ID" value="BAG96573.1"/>
    <property type="molecule type" value="mRNA"/>
</dbReference>
<dbReference type="EMBL" id="AK104350">
    <property type="protein sequence ID" value="BAG96613.1"/>
    <property type="molecule type" value="mRNA"/>
</dbReference>
<dbReference type="PIR" id="A44956">
    <property type="entry name" value="A44956"/>
</dbReference>
<dbReference type="PIR" id="S03705">
    <property type="entry name" value="S03705"/>
</dbReference>
<dbReference type="RefSeq" id="XP_015611833.1">
    <property type="nucleotide sequence ID" value="XM_015756347.1"/>
</dbReference>
<dbReference type="SMR" id="P12330"/>
<dbReference type="BioGRID" id="815840">
    <property type="interactions" value="1"/>
</dbReference>
<dbReference type="FunCoup" id="P12330">
    <property type="interactions" value="733"/>
</dbReference>
<dbReference type="STRING" id="39947.P12330"/>
<dbReference type="PaxDb" id="39947-P12330"/>
<dbReference type="EnsemblPlants" id="Os09t0346500-04">
    <property type="protein sequence ID" value="Os09t0346500-04"/>
    <property type="gene ID" value="Os09g0346500"/>
</dbReference>
<dbReference type="Gramene" id="Os09t0346500-04">
    <property type="protein sequence ID" value="Os09t0346500-04"/>
    <property type="gene ID" value="Os09g0346500"/>
</dbReference>
<dbReference type="KEGG" id="dosa:Os09g0346500"/>
<dbReference type="eggNOG" id="ENOG502QPU1">
    <property type="taxonomic scope" value="Eukaryota"/>
</dbReference>
<dbReference type="HOGENOM" id="CLU_057943_2_0_1"/>
<dbReference type="InParanoid" id="P12330"/>
<dbReference type="OMA" id="CRPQENT"/>
<dbReference type="OrthoDB" id="423598at2759"/>
<dbReference type="Proteomes" id="UP000000763">
    <property type="component" value="Chromosome 9"/>
</dbReference>
<dbReference type="Proteomes" id="UP000059680">
    <property type="component" value="Chromosome 9"/>
</dbReference>
<dbReference type="GO" id="GO:0009535">
    <property type="term" value="C:chloroplast thylakoid membrane"/>
    <property type="evidence" value="ECO:0000250"/>
    <property type="project" value="Gramene"/>
</dbReference>
<dbReference type="GO" id="GO:0009522">
    <property type="term" value="C:photosystem I"/>
    <property type="evidence" value="ECO:0007669"/>
    <property type="project" value="UniProtKB-KW"/>
</dbReference>
<dbReference type="GO" id="GO:0009523">
    <property type="term" value="C:photosystem II"/>
    <property type="evidence" value="ECO:0007669"/>
    <property type="project" value="UniProtKB-KW"/>
</dbReference>
<dbReference type="GO" id="GO:0016168">
    <property type="term" value="F:chlorophyll binding"/>
    <property type="evidence" value="ECO:0007669"/>
    <property type="project" value="UniProtKB-KW"/>
</dbReference>
<dbReference type="GO" id="GO:0046872">
    <property type="term" value="F:metal ion binding"/>
    <property type="evidence" value="ECO:0007669"/>
    <property type="project" value="UniProtKB-KW"/>
</dbReference>
<dbReference type="GO" id="GO:0015979">
    <property type="term" value="P:photosynthesis"/>
    <property type="evidence" value="ECO:0000250"/>
    <property type="project" value="Gramene"/>
</dbReference>
<dbReference type="GO" id="GO:0009768">
    <property type="term" value="P:photosynthesis, light harvesting in photosystem I"/>
    <property type="evidence" value="ECO:0000318"/>
    <property type="project" value="GO_Central"/>
</dbReference>
<dbReference type="GO" id="GO:0009416">
    <property type="term" value="P:response to light stimulus"/>
    <property type="evidence" value="ECO:0000318"/>
    <property type="project" value="GO_Central"/>
</dbReference>
<dbReference type="FunFam" id="1.10.3460.10:FF:000001">
    <property type="entry name" value="Chlorophyll a-b binding protein, chloroplastic"/>
    <property type="match status" value="1"/>
</dbReference>
<dbReference type="Gene3D" id="1.10.3460.10">
    <property type="entry name" value="Chlorophyll a/b binding protein domain"/>
    <property type="match status" value="1"/>
</dbReference>
<dbReference type="InterPro" id="IPR001344">
    <property type="entry name" value="Chloro_AB-bd_pln"/>
</dbReference>
<dbReference type="InterPro" id="IPR022796">
    <property type="entry name" value="Chloroa_b-bind"/>
</dbReference>
<dbReference type="PANTHER" id="PTHR21649">
    <property type="entry name" value="CHLOROPHYLL A/B BINDING PROTEIN"/>
    <property type="match status" value="1"/>
</dbReference>
<dbReference type="Pfam" id="PF00504">
    <property type="entry name" value="Chloroa_b-bind"/>
    <property type="match status" value="1"/>
</dbReference>
<dbReference type="SUPFAM" id="SSF103511">
    <property type="entry name" value="Chlorophyll a-b binding protein"/>
    <property type="match status" value="1"/>
</dbReference>
<protein>
    <recommendedName>
        <fullName>Chlorophyll a-b binding protein 1, chloroplastic</fullName>
    </recommendedName>
    <alternativeName>
        <fullName>LHCII type I CAB-1</fullName>
        <shortName>LHCP</shortName>
    </alternativeName>
</protein>
<comment type="function">
    <text>The light-harvesting complex (LHC) functions as a light receptor, it captures and delivers excitation energy to photosystems with which it is closely associated.</text>
</comment>
<comment type="cofactor">
    <text evidence="1">Binds at least 14 chlorophylls (8 Chl-a and 6 Chl-b) and carotenoids such as lutein and neoxanthin.</text>
</comment>
<comment type="subunit">
    <text>The LHC complex consists of chlorophyll a-b binding proteins.</text>
</comment>
<comment type="subcellular location">
    <subcellularLocation>
        <location>Plastid</location>
        <location>Chloroplast thylakoid membrane</location>
        <topology>Multi-pass membrane protein</topology>
    </subcellularLocation>
</comment>
<comment type="domain">
    <text>The N-terminus of the protein extends into the stroma where it is involved with adhesion of granal membranes and post-translational modifications; both are believed to mediate the distribution of excitation energy between photosystems I and II.</text>
</comment>
<comment type="PTM">
    <text evidence="1">Photoregulated by reversible phosphorylation of its threonine residues.</text>
</comment>
<comment type="similarity">
    <text evidence="5">Belongs to the light-harvesting chlorophyll a/b-binding (LHC) protein family.</text>
</comment>
<evidence type="ECO:0000250" key="1"/>
<evidence type="ECO:0000250" key="2">
    <source>
        <dbReference type="UniProtKB" id="P07371"/>
    </source>
</evidence>
<evidence type="ECO:0000250" key="3">
    <source>
        <dbReference type="UniProtKB" id="P12333"/>
    </source>
</evidence>
<evidence type="ECO:0000255" key="4"/>
<evidence type="ECO:0000305" key="5"/>
<reference key="1">
    <citation type="journal article" date="1989" name="Nucleic Acids Res.">
        <title>Nucleotide sequences of two genes encoding the light harvesting chlorophyll a/b binding protein of rice.</title>
        <authorList>
            <person name="Luan S."/>
            <person name="Bogorad L."/>
        </authorList>
    </citation>
    <scope>NUCLEOTIDE SEQUENCE [GENOMIC DNA]</scope>
</reference>
<reference key="2">
    <citation type="journal article" date="1990" name="Plant Cell Physiol.">
        <title>Classification and characterization of cDNA that encodes the light-harvesting chlorophyll a/b binding protein of photosystem II from rice.</title>
        <authorList>
            <person name="Matsuoka M."/>
        </authorList>
    </citation>
    <scope>NUCLEOTIDE SEQUENCE [MRNA]</scope>
    <source>
        <strain>cv. Nipponbare</strain>
        <tissue>Leaf</tissue>
    </source>
</reference>
<reference key="3">
    <citation type="journal article" date="2005" name="Nature">
        <title>The map-based sequence of the rice genome.</title>
        <authorList>
            <consortium name="International rice genome sequencing project (IRGSP)"/>
        </authorList>
    </citation>
    <scope>NUCLEOTIDE SEQUENCE [LARGE SCALE GENOMIC DNA]</scope>
    <source>
        <strain>cv. Nipponbare</strain>
    </source>
</reference>
<reference key="4">
    <citation type="journal article" date="2008" name="Nucleic Acids Res.">
        <title>The rice annotation project database (RAP-DB): 2008 update.</title>
        <authorList>
            <consortium name="The rice annotation project (RAP)"/>
        </authorList>
    </citation>
    <scope>GENOME REANNOTATION</scope>
    <source>
        <strain>cv. Nipponbare</strain>
    </source>
</reference>
<reference key="5">
    <citation type="journal article" date="2013" name="Rice">
        <title>Improvement of the Oryza sativa Nipponbare reference genome using next generation sequence and optical map data.</title>
        <authorList>
            <person name="Kawahara Y."/>
            <person name="de la Bastide M."/>
            <person name="Hamilton J.P."/>
            <person name="Kanamori H."/>
            <person name="McCombie W.R."/>
            <person name="Ouyang S."/>
            <person name="Schwartz D.C."/>
            <person name="Tanaka T."/>
            <person name="Wu J."/>
            <person name="Zhou S."/>
            <person name="Childs K.L."/>
            <person name="Davidson R.M."/>
            <person name="Lin H."/>
            <person name="Quesada-Ocampo L."/>
            <person name="Vaillancourt B."/>
            <person name="Sakai H."/>
            <person name="Lee S.S."/>
            <person name="Kim J."/>
            <person name="Numa H."/>
            <person name="Itoh T."/>
            <person name="Buell C.R."/>
            <person name="Matsumoto T."/>
        </authorList>
    </citation>
    <scope>GENOME REANNOTATION</scope>
    <source>
        <strain>cv. Nipponbare</strain>
    </source>
</reference>
<reference key="6">
    <citation type="journal article" date="2003" name="Science">
        <title>Collection, mapping, and annotation of over 28,000 cDNA clones from japonica rice.</title>
        <authorList>
            <consortium name="The rice full-length cDNA consortium"/>
        </authorList>
    </citation>
    <scope>NUCLEOTIDE SEQUENCE [LARGE SCALE MRNA]</scope>
    <source>
        <strain>cv. Nipponbare</strain>
    </source>
</reference>